<feature type="signal peptide" evidence="1">
    <location>
        <begin position="1"/>
        <end position="19"/>
    </location>
</feature>
<feature type="chain" id="PRO_0000007385" description="Thiol:disulfide interchange protein DsbD">
    <location>
        <begin position="20"/>
        <end position="567"/>
    </location>
</feature>
<feature type="transmembrane region" description="Helical" evidence="1">
    <location>
        <begin position="170"/>
        <end position="192"/>
    </location>
</feature>
<feature type="transmembrane region" description="Helical" evidence="1">
    <location>
        <begin position="212"/>
        <end position="234"/>
    </location>
</feature>
<feature type="transmembrane region" description="Helical" evidence="1">
    <location>
        <begin position="246"/>
        <end position="268"/>
    </location>
</feature>
<feature type="transmembrane region" description="Helical" evidence="1">
    <location>
        <begin position="297"/>
        <end position="319"/>
    </location>
</feature>
<feature type="transmembrane region" description="Helical" evidence="1">
    <location>
        <begin position="326"/>
        <end position="348"/>
    </location>
</feature>
<feature type="transmembrane region" description="Helical" evidence="1">
    <location>
        <begin position="358"/>
        <end position="380"/>
    </location>
</feature>
<feature type="transmembrane region" description="Helical" evidence="1">
    <location>
        <begin position="387"/>
        <end position="409"/>
    </location>
</feature>
<feature type="domain" description="Thioredoxin" evidence="1">
    <location>
        <begin position="435"/>
        <end position="567"/>
    </location>
</feature>
<feature type="disulfide bond" description="Redox-active" evidence="1">
    <location>
        <begin position="122"/>
        <end position="128"/>
    </location>
</feature>
<feature type="disulfide bond" description="Redox-active" evidence="1">
    <location>
        <begin position="185"/>
        <end position="307"/>
    </location>
</feature>
<feature type="disulfide bond" description="Redox-active" evidence="1">
    <location>
        <begin position="482"/>
        <end position="485"/>
    </location>
</feature>
<evidence type="ECO:0000255" key="1">
    <source>
        <dbReference type="HAMAP-Rule" id="MF_00399"/>
    </source>
</evidence>
<sequence>MAQRIFTLILLLCSTSAFAGLFDAPGRSQFVPADRAFVFDFQQNQHDLTLSWQVKEGYYLYRKQISITPTKADIAAVQLPAGVWHEDEFYGKSEIYRKRLNVPVTVNQAAAGATLTITYQGCADAGFCYPPETKTVPLSEVAAAIDATPTPAVTQTGETSKPAAQLPFSALWALLIGIGIAFTPCVLPMYPLISGIVLGGRQRLSTGRALLLAFIYVQGMALTYTALGLVVAAAGLQFQAALQHPYVLIGLAIVFTLLALSMFGLFTLQLPSSLQTRLTLMSNRQQGGSPGGVFVMGAIAGLICSPCTTAPLSAILLYIAQSGNMWLGGGTLYLYALGMGLPLMLVTVFGNRLLPKSGPWMAHVKTAFGFVILALPVFLLERIIGEAWGLRLWSLLGVAFFGWAFITSLQARRAWMRIVQIILLAAALISVRPLQDWAFGSPSAQAPAHLNFTAISTVDELNQALAQAKGKPVMLDFYADWCVACKEFEKYTFSDPRVQQVLGDTVLLQANVTANNAQDVALLKHLQVLGLPTILFFDAQGQEQPQARVTGFMDAATFSAHLHDRQP</sequence>
<protein>
    <recommendedName>
        <fullName evidence="1">Thiol:disulfide interchange protein DsbD</fullName>
        <ecNumber evidence="1">1.8.1.8</ecNumber>
    </recommendedName>
    <alternativeName>
        <fullName evidence="1">Protein-disulfide reductase</fullName>
        <shortName evidence="1">Disulfide reductase</shortName>
    </alternativeName>
</protein>
<name>DSBD_SALTI</name>
<organism>
    <name type="scientific">Salmonella typhi</name>
    <dbReference type="NCBI Taxonomy" id="90370"/>
    <lineage>
        <taxon>Bacteria</taxon>
        <taxon>Pseudomonadati</taxon>
        <taxon>Pseudomonadota</taxon>
        <taxon>Gammaproteobacteria</taxon>
        <taxon>Enterobacterales</taxon>
        <taxon>Enterobacteriaceae</taxon>
        <taxon>Salmonella</taxon>
    </lineage>
</organism>
<proteinExistence type="inferred from homology"/>
<dbReference type="EC" id="1.8.1.8" evidence="1"/>
<dbReference type="EMBL" id="AL513382">
    <property type="protein sequence ID" value="CAD06802.1"/>
    <property type="molecule type" value="Genomic_DNA"/>
</dbReference>
<dbReference type="EMBL" id="AE014613">
    <property type="protein sequence ID" value="AAO71825.1"/>
    <property type="molecule type" value="Genomic_DNA"/>
</dbReference>
<dbReference type="RefSeq" id="NP_458761.1">
    <property type="nucleotide sequence ID" value="NC_003198.1"/>
</dbReference>
<dbReference type="RefSeq" id="WP_000068881.1">
    <property type="nucleotide sequence ID" value="NZ_WSUR01000012.1"/>
</dbReference>
<dbReference type="SMR" id="Q8Z1A8"/>
<dbReference type="STRING" id="220341.gene:17588500"/>
<dbReference type="KEGG" id="stt:t4374"/>
<dbReference type="KEGG" id="sty:STY4682"/>
<dbReference type="PATRIC" id="fig|220341.7.peg.4782"/>
<dbReference type="eggNOG" id="COG4232">
    <property type="taxonomic scope" value="Bacteria"/>
</dbReference>
<dbReference type="HOGENOM" id="CLU_014657_3_0_6"/>
<dbReference type="OMA" id="WPIIPMT"/>
<dbReference type="OrthoDB" id="9811036at2"/>
<dbReference type="Proteomes" id="UP000000541">
    <property type="component" value="Chromosome"/>
</dbReference>
<dbReference type="Proteomes" id="UP000002670">
    <property type="component" value="Chromosome"/>
</dbReference>
<dbReference type="GO" id="GO:0005886">
    <property type="term" value="C:plasma membrane"/>
    <property type="evidence" value="ECO:0007669"/>
    <property type="project" value="UniProtKB-SubCell"/>
</dbReference>
<dbReference type="GO" id="GO:0009055">
    <property type="term" value="F:electron transfer activity"/>
    <property type="evidence" value="ECO:0007669"/>
    <property type="project" value="UniProtKB-UniRule"/>
</dbReference>
<dbReference type="GO" id="GO:0047134">
    <property type="term" value="F:protein-disulfide reductase [NAD(P)H] activity"/>
    <property type="evidence" value="ECO:0007669"/>
    <property type="project" value="UniProtKB-UniRule"/>
</dbReference>
<dbReference type="GO" id="GO:0045454">
    <property type="term" value="P:cell redox homeostasis"/>
    <property type="evidence" value="ECO:0007669"/>
    <property type="project" value="TreeGrafter"/>
</dbReference>
<dbReference type="GO" id="GO:0017004">
    <property type="term" value="P:cytochrome complex assembly"/>
    <property type="evidence" value="ECO:0007669"/>
    <property type="project" value="UniProtKB-UniRule"/>
</dbReference>
<dbReference type="CDD" id="cd02953">
    <property type="entry name" value="DsbDgamma"/>
    <property type="match status" value="1"/>
</dbReference>
<dbReference type="FunFam" id="2.60.40.1250:FF:000001">
    <property type="entry name" value="Thiol:disulfide interchange protein DsbD"/>
    <property type="match status" value="1"/>
</dbReference>
<dbReference type="FunFam" id="3.40.30.10:FF:000116">
    <property type="entry name" value="Thiol:disulfide interchange protein DsbD"/>
    <property type="match status" value="1"/>
</dbReference>
<dbReference type="Gene3D" id="3.40.30.10">
    <property type="entry name" value="Glutaredoxin"/>
    <property type="match status" value="1"/>
</dbReference>
<dbReference type="Gene3D" id="2.60.40.1250">
    <property type="entry name" value="Thiol:disulfide interchange protein DsbD, N-terminal domain"/>
    <property type="match status" value="1"/>
</dbReference>
<dbReference type="HAMAP" id="MF_00399">
    <property type="entry name" value="DbsD"/>
    <property type="match status" value="1"/>
</dbReference>
<dbReference type="InterPro" id="IPR003834">
    <property type="entry name" value="Cyt_c_assmbl_TM_dom"/>
</dbReference>
<dbReference type="InterPro" id="IPR035671">
    <property type="entry name" value="DsbD_gamma"/>
</dbReference>
<dbReference type="InterPro" id="IPR028250">
    <property type="entry name" value="DsbDN"/>
</dbReference>
<dbReference type="InterPro" id="IPR036929">
    <property type="entry name" value="DsbDN_sf"/>
</dbReference>
<dbReference type="InterPro" id="IPR022910">
    <property type="entry name" value="Thiol_diS_interchange_DbsD"/>
</dbReference>
<dbReference type="InterPro" id="IPR036249">
    <property type="entry name" value="Thioredoxin-like_sf"/>
</dbReference>
<dbReference type="InterPro" id="IPR017937">
    <property type="entry name" value="Thioredoxin_CS"/>
</dbReference>
<dbReference type="InterPro" id="IPR013766">
    <property type="entry name" value="Thioredoxin_domain"/>
</dbReference>
<dbReference type="NCBIfam" id="NF001419">
    <property type="entry name" value="PRK00293.1"/>
    <property type="match status" value="1"/>
</dbReference>
<dbReference type="PANTHER" id="PTHR32234">
    <property type="entry name" value="THIOL:DISULFIDE INTERCHANGE PROTEIN DSBD"/>
    <property type="match status" value="1"/>
</dbReference>
<dbReference type="PANTHER" id="PTHR32234:SF0">
    <property type="entry name" value="THIOL:DISULFIDE INTERCHANGE PROTEIN DSBD"/>
    <property type="match status" value="1"/>
</dbReference>
<dbReference type="Pfam" id="PF11412">
    <property type="entry name" value="DsbD_N"/>
    <property type="match status" value="1"/>
</dbReference>
<dbReference type="Pfam" id="PF02683">
    <property type="entry name" value="DsbD_TM"/>
    <property type="match status" value="1"/>
</dbReference>
<dbReference type="Pfam" id="PF13899">
    <property type="entry name" value="Thioredoxin_7"/>
    <property type="match status" value="1"/>
</dbReference>
<dbReference type="SUPFAM" id="SSF74863">
    <property type="entry name" value="Thiol:disulfide interchange protein DsbD, N-terminal domain (DsbD-alpha)"/>
    <property type="match status" value="1"/>
</dbReference>
<dbReference type="SUPFAM" id="SSF52833">
    <property type="entry name" value="Thioredoxin-like"/>
    <property type="match status" value="1"/>
</dbReference>
<dbReference type="PROSITE" id="PS00194">
    <property type="entry name" value="THIOREDOXIN_1"/>
    <property type="match status" value="1"/>
</dbReference>
<dbReference type="PROSITE" id="PS51352">
    <property type="entry name" value="THIOREDOXIN_2"/>
    <property type="match status" value="1"/>
</dbReference>
<reference key="1">
    <citation type="journal article" date="2001" name="Nature">
        <title>Complete genome sequence of a multiple drug resistant Salmonella enterica serovar Typhi CT18.</title>
        <authorList>
            <person name="Parkhill J."/>
            <person name="Dougan G."/>
            <person name="James K.D."/>
            <person name="Thomson N.R."/>
            <person name="Pickard D."/>
            <person name="Wain J."/>
            <person name="Churcher C.M."/>
            <person name="Mungall K.L."/>
            <person name="Bentley S.D."/>
            <person name="Holden M.T.G."/>
            <person name="Sebaihia M."/>
            <person name="Baker S."/>
            <person name="Basham D."/>
            <person name="Brooks K."/>
            <person name="Chillingworth T."/>
            <person name="Connerton P."/>
            <person name="Cronin A."/>
            <person name="Davis P."/>
            <person name="Davies R.M."/>
            <person name="Dowd L."/>
            <person name="White N."/>
            <person name="Farrar J."/>
            <person name="Feltwell T."/>
            <person name="Hamlin N."/>
            <person name="Haque A."/>
            <person name="Hien T.T."/>
            <person name="Holroyd S."/>
            <person name="Jagels K."/>
            <person name="Krogh A."/>
            <person name="Larsen T.S."/>
            <person name="Leather S."/>
            <person name="Moule S."/>
            <person name="O'Gaora P."/>
            <person name="Parry C."/>
            <person name="Quail M.A."/>
            <person name="Rutherford K.M."/>
            <person name="Simmonds M."/>
            <person name="Skelton J."/>
            <person name="Stevens K."/>
            <person name="Whitehead S."/>
            <person name="Barrell B.G."/>
        </authorList>
    </citation>
    <scope>NUCLEOTIDE SEQUENCE [LARGE SCALE GENOMIC DNA]</scope>
    <source>
        <strain>CT18</strain>
    </source>
</reference>
<reference key="2">
    <citation type="journal article" date="2003" name="J. Bacteriol.">
        <title>Comparative genomics of Salmonella enterica serovar Typhi strains Ty2 and CT18.</title>
        <authorList>
            <person name="Deng W."/>
            <person name="Liou S.-R."/>
            <person name="Plunkett G. III"/>
            <person name="Mayhew G.F."/>
            <person name="Rose D.J."/>
            <person name="Burland V."/>
            <person name="Kodoyianni V."/>
            <person name="Schwartz D.C."/>
            <person name="Blattner F.R."/>
        </authorList>
    </citation>
    <scope>NUCLEOTIDE SEQUENCE [LARGE SCALE GENOMIC DNA]</scope>
    <source>
        <strain>ATCC 700931 / Ty2</strain>
    </source>
</reference>
<accession>Q8Z1A8</accession>
<keyword id="KW-0997">Cell inner membrane</keyword>
<keyword id="KW-1003">Cell membrane</keyword>
<keyword id="KW-0201">Cytochrome c-type biogenesis</keyword>
<keyword id="KW-1015">Disulfide bond</keyword>
<keyword id="KW-0249">Electron transport</keyword>
<keyword id="KW-0472">Membrane</keyword>
<keyword id="KW-0520">NAD</keyword>
<keyword id="KW-0560">Oxidoreductase</keyword>
<keyword id="KW-0676">Redox-active center</keyword>
<keyword id="KW-0732">Signal</keyword>
<keyword id="KW-0812">Transmembrane</keyword>
<keyword id="KW-1133">Transmembrane helix</keyword>
<keyword id="KW-0813">Transport</keyword>
<comment type="function">
    <text evidence="1">Required to facilitate the formation of correct disulfide bonds in some periplasmic proteins and for the assembly of the periplasmic c-type cytochromes. Acts by transferring electrons from cytoplasmic thioredoxin to the periplasm. This transfer involves a cascade of disulfide bond formation and reduction steps.</text>
</comment>
<comment type="catalytic activity">
    <reaction evidence="1">
        <text>[protein]-dithiol + NAD(+) = [protein]-disulfide + NADH + H(+)</text>
        <dbReference type="Rhea" id="RHEA:18749"/>
        <dbReference type="Rhea" id="RHEA-COMP:10593"/>
        <dbReference type="Rhea" id="RHEA-COMP:10594"/>
        <dbReference type="ChEBI" id="CHEBI:15378"/>
        <dbReference type="ChEBI" id="CHEBI:29950"/>
        <dbReference type="ChEBI" id="CHEBI:50058"/>
        <dbReference type="ChEBI" id="CHEBI:57540"/>
        <dbReference type="ChEBI" id="CHEBI:57945"/>
        <dbReference type="EC" id="1.8.1.8"/>
    </reaction>
</comment>
<comment type="catalytic activity">
    <reaction evidence="1">
        <text>[protein]-dithiol + NADP(+) = [protein]-disulfide + NADPH + H(+)</text>
        <dbReference type="Rhea" id="RHEA:18753"/>
        <dbReference type="Rhea" id="RHEA-COMP:10593"/>
        <dbReference type="Rhea" id="RHEA-COMP:10594"/>
        <dbReference type="ChEBI" id="CHEBI:15378"/>
        <dbReference type="ChEBI" id="CHEBI:29950"/>
        <dbReference type="ChEBI" id="CHEBI:50058"/>
        <dbReference type="ChEBI" id="CHEBI:57783"/>
        <dbReference type="ChEBI" id="CHEBI:58349"/>
        <dbReference type="EC" id="1.8.1.8"/>
    </reaction>
</comment>
<comment type="subcellular location">
    <subcellularLocation>
        <location evidence="1">Cell inner membrane</location>
        <topology evidence="1">Multi-pass membrane protein</topology>
    </subcellularLocation>
</comment>
<comment type="similarity">
    <text evidence="1">Belongs to the thioredoxin family. DsbD subfamily.</text>
</comment>
<gene>
    <name evidence="1" type="primary">dsbD</name>
    <name type="ordered locus">STY4682</name>
    <name type="ordered locus">t4374</name>
</gene>